<gene>
    <name evidence="1" type="primary">glgC</name>
    <name type="ordered locus">VF_A0806</name>
</gene>
<keyword id="KW-0067">ATP-binding</keyword>
<keyword id="KW-0119">Carbohydrate metabolism</keyword>
<keyword id="KW-0320">Glycogen biosynthesis</keyword>
<keyword id="KW-0321">Glycogen metabolism</keyword>
<keyword id="KW-0547">Nucleotide-binding</keyword>
<keyword id="KW-0548">Nucleotidyltransferase</keyword>
<keyword id="KW-1185">Reference proteome</keyword>
<keyword id="KW-0808">Transferase</keyword>
<accession>Q5DZC0</accession>
<proteinExistence type="inferred from homology"/>
<name>GLGC_ALIF1</name>
<feature type="chain" id="PRO_0000195345" description="Glucose-1-phosphate adenylyltransferase">
    <location>
        <begin position="1"/>
        <end position="405"/>
    </location>
</feature>
<feature type="binding site" evidence="1">
    <location>
        <position position="96"/>
    </location>
    <ligand>
        <name>alpha-D-glucose 1-phosphate</name>
        <dbReference type="ChEBI" id="CHEBI:58601"/>
    </ligand>
</feature>
<feature type="binding site" evidence="1">
    <location>
        <position position="161"/>
    </location>
    <ligand>
        <name>alpha-D-glucose 1-phosphate</name>
        <dbReference type="ChEBI" id="CHEBI:58601"/>
    </ligand>
</feature>
<feature type="binding site" evidence="1">
    <location>
        <begin position="176"/>
        <end position="177"/>
    </location>
    <ligand>
        <name>alpha-D-glucose 1-phosphate</name>
        <dbReference type="ChEBI" id="CHEBI:58601"/>
    </ligand>
</feature>
<feature type="binding site" evidence="1">
    <location>
        <position position="194"/>
    </location>
    <ligand>
        <name>alpha-D-glucose 1-phosphate</name>
        <dbReference type="ChEBI" id="CHEBI:58601"/>
    </ligand>
</feature>
<organism>
    <name type="scientific">Aliivibrio fischeri (strain ATCC 700601 / ES114)</name>
    <name type="common">Vibrio fischeri</name>
    <dbReference type="NCBI Taxonomy" id="312309"/>
    <lineage>
        <taxon>Bacteria</taxon>
        <taxon>Pseudomonadati</taxon>
        <taxon>Pseudomonadota</taxon>
        <taxon>Gammaproteobacteria</taxon>
        <taxon>Vibrionales</taxon>
        <taxon>Vibrionaceae</taxon>
        <taxon>Aliivibrio</taxon>
    </lineage>
</organism>
<evidence type="ECO:0000255" key="1">
    <source>
        <dbReference type="HAMAP-Rule" id="MF_00624"/>
    </source>
</evidence>
<dbReference type="EC" id="2.7.7.27" evidence="1"/>
<dbReference type="EMBL" id="CP000021">
    <property type="protein sequence ID" value="AAW87876.1"/>
    <property type="molecule type" value="Genomic_DNA"/>
</dbReference>
<dbReference type="RefSeq" id="WP_011263626.1">
    <property type="nucleotide sequence ID" value="NC_006841.2"/>
</dbReference>
<dbReference type="RefSeq" id="YP_206764.1">
    <property type="nucleotide sequence ID" value="NC_006841.2"/>
</dbReference>
<dbReference type="SMR" id="Q5DZC0"/>
<dbReference type="STRING" id="312309.VF_A0806"/>
<dbReference type="EnsemblBacteria" id="AAW87876">
    <property type="protein sequence ID" value="AAW87876"/>
    <property type="gene ID" value="VF_A0806"/>
</dbReference>
<dbReference type="GeneID" id="54166125"/>
<dbReference type="KEGG" id="vfi:VF_A0806"/>
<dbReference type="PATRIC" id="fig|312309.11.peg.3408"/>
<dbReference type="eggNOG" id="COG0448">
    <property type="taxonomic scope" value="Bacteria"/>
</dbReference>
<dbReference type="HOGENOM" id="CLU_029499_14_1_6"/>
<dbReference type="OrthoDB" id="9801810at2"/>
<dbReference type="UniPathway" id="UPA00164"/>
<dbReference type="Proteomes" id="UP000000537">
    <property type="component" value="Chromosome II"/>
</dbReference>
<dbReference type="GO" id="GO:0005524">
    <property type="term" value="F:ATP binding"/>
    <property type="evidence" value="ECO:0007669"/>
    <property type="project" value="UniProtKB-KW"/>
</dbReference>
<dbReference type="GO" id="GO:0008878">
    <property type="term" value="F:glucose-1-phosphate adenylyltransferase activity"/>
    <property type="evidence" value="ECO:0007669"/>
    <property type="project" value="UniProtKB-UniRule"/>
</dbReference>
<dbReference type="GO" id="GO:0005978">
    <property type="term" value="P:glycogen biosynthetic process"/>
    <property type="evidence" value="ECO:0007669"/>
    <property type="project" value="UniProtKB-UniRule"/>
</dbReference>
<dbReference type="CDD" id="cd02508">
    <property type="entry name" value="ADP_Glucose_PP"/>
    <property type="match status" value="1"/>
</dbReference>
<dbReference type="CDD" id="cd04651">
    <property type="entry name" value="LbH_G1P_AT_C"/>
    <property type="match status" value="1"/>
</dbReference>
<dbReference type="Gene3D" id="2.160.10.10">
    <property type="entry name" value="Hexapeptide repeat proteins"/>
    <property type="match status" value="1"/>
</dbReference>
<dbReference type="Gene3D" id="3.90.550.10">
    <property type="entry name" value="Spore Coat Polysaccharide Biosynthesis Protein SpsA, Chain A"/>
    <property type="match status" value="1"/>
</dbReference>
<dbReference type="HAMAP" id="MF_00624">
    <property type="entry name" value="GlgC"/>
    <property type="match status" value="1"/>
</dbReference>
<dbReference type="InterPro" id="IPR011831">
    <property type="entry name" value="ADP-Glc_PPase"/>
</dbReference>
<dbReference type="InterPro" id="IPR005836">
    <property type="entry name" value="ADP_Glu_pyroP_CS"/>
</dbReference>
<dbReference type="InterPro" id="IPR023049">
    <property type="entry name" value="GlgC_bac"/>
</dbReference>
<dbReference type="InterPro" id="IPR056818">
    <property type="entry name" value="GlmU/GlgC-like_hexapep"/>
</dbReference>
<dbReference type="InterPro" id="IPR005835">
    <property type="entry name" value="NTP_transferase_dom"/>
</dbReference>
<dbReference type="InterPro" id="IPR029044">
    <property type="entry name" value="Nucleotide-diphossugar_trans"/>
</dbReference>
<dbReference type="InterPro" id="IPR011004">
    <property type="entry name" value="Trimer_LpxA-like_sf"/>
</dbReference>
<dbReference type="NCBIfam" id="TIGR02091">
    <property type="entry name" value="glgC"/>
    <property type="match status" value="1"/>
</dbReference>
<dbReference type="NCBIfam" id="NF001947">
    <property type="entry name" value="PRK00725.1"/>
    <property type="match status" value="1"/>
</dbReference>
<dbReference type="NCBIfam" id="NF002023">
    <property type="entry name" value="PRK00844.1"/>
    <property type="match status" value="1"/>
</dbReference>
<dbReference type="PANTHER" id="PTHR43523:SF2">
    <property type="entry name" value="GLUCOSE-1-PHOSPHATE ADENYLYLTRANSFERASE"/>
    <property type="match status" value="1"/>
</dbReference>
<dbReference type="PANTHER" id="PTHR43523">
    <property type="entry name" value="GLUCOSE-1-PHOSPHATE ADENYLYLTRANSFERASE-RELATED"/>
    <property type="match status" value="1"/>
</dbReference>
<dbReference type="Pfam" id="PF24894">
    <property type="entry name" value="Hexapep_GlmU"/>
    <property type="match status" value="1"/>
</dbReference>
<dbReference type="Pfam" id="PF00483">
    <property type="entry name" value="NTP_transferase"/>
    <property type="match status" value="1"/>
</dbReference>
<dbReference type="SUPFAM" id="SSF53448">
    <property type="entry name" value="Nucleotide-diphospho-sugar transferases"/>
    <property type="match status" value="1"/>
</dbReference>
<dbReference type="SUPFAM" id="SSF51161">
    <property type="entry name" value="Trimeric LpxA-like enzymes"/>
    <property type="match status" value="1"/>
</dbReference>
<dbReference type="PROSITE" id="PS00808">
    <property type="entry name" value="ADP_GLC_PYROPHOSPH_1"/>
    <property type="match status" value="1"/>
</dbReference>
<dbReference type="PROSITE" id="PS00809">
    <property type="entry name" value="ADP_GLC_PYROPHOSPH_2"/>
    <property type="match status" value="1"/>
</dbReference>
<dbReference type="PROSITE" id="PS00810">
    <property type="entry name" value="ADP_GLC_PYROPHOSPH_3"/>
    <property type="match status" value="1"/>
</dbReference>
<comment type="function">
    <text evidence="1">Involved in the biosynthesis of ADP-glucose, a building block required for the elongation reactions to produce glycogen. Catalyzes the reaction between ATP and alpha-D-glucose 1-phosphate (G1P) to produce pyrophosphate and ADP-Glc.</text>
</comment>
<comment type="catalytic activity">
    <reaction evidence="1">
        <text>alpha-D-glucose 1-phosphate + ATP + H(+) = ADP-alpha-D-glucose + diphosphate</text>
        <dbReference type="Rhea" id="RHEA:12120"/>
        <dbReference type="ChEBI" id="CHEBI:15378"/>
        <dbReference type="ChEBI" id="CHEBI:30616"/>
        <dbReference type="ChEBI" id="CHEBI:33019"/>
        <dbReference type="ChEBI" id="CHEBI:57498"/>
        <dbReference type="ChEBI" id="CHEBI:58601"/>
        <dbReference type="EC" id="2.7.7.27"/>
    </reaction>
</comment>
<comment type="pathway">
    <text evidence="1">Glycan biosynthesis; glycogen biosynthesis.</text>
</comment>
<comment type="subunit">
    <text evidence="1">Homotetramer.</text>
</comment>
<comment type="similarity">
    <text evidence="1">Belongs to the bacterial/plant glucose-1-phosphate adenylyltransferase family.</text>
</comment>
<reference key="1">
    <citation type="journal article" date="2005" name="Proc. Natl. Acad. Sci. U.S.A.">
        <title>Complete genome sequence of Vibrio fischeri: a symbiotic bacterium with pathogenic congeners.</title>
        <authorList>
            <person name="Ruby E.G."/>
            <person name="Urbanowski M."/>
            <person name="Campbell J."/>
            <person name="Dunn A."/>
            <person name="Faini M."/>
            <person name="Gunsalus R."/>
            <person name="Lostroh P."/>
            <person name="Lupp C."/>
            <person name="McCann J."/>
            <person name="Millikan D."/>
            <person name="Schaefer A."/>
            <person name="Stabb E."/>
            <person name="Stevens A."/>
            <person name="Visick K."/>
            <person name="Whistler C."/>
            <person name="Greenberg E.P."/>
        </authorList>
    </citation>
    <scope>NUCLEOTIDE SEQUENCE [LARGE SCALE GENOMIC DNA]</scope>
    <source>
        <strain>ATCC 700601 / ES114</strain>
    </source>
</reference>
<sequence length="405" mass="45212">MAGVLGMILAGGEGSRLRPLTESRTKPAVPFGGSYRLIDFALNNFVNADLMRIYVLTQFKSQSLFQHMKKGWNVNGITDRFIDPVPAQMRTGKRWYEGTADAIYQNISFIESTDPEHVCIFGSDHIYKMDIRQMLDFHKKKKAALTVSALRMPAKDASGFGVIEVDEHGKMIGFEEKPSNPKCIPGQPGIALVSMGNYIFEAESLCKELIHDAALEDSSHDFGKDIIPKMFPEGNVYVYDFSTNHIKGEKKEVYWRDVGTIESYWEAHMDLLKKDAPFSLYNRKWPLHTYYPPLPPATFSDSDNGRVQIIDSLVCGGSYIRGSRIEKSVLGFRSNIASACDISESILLGNVKVGKGCVLRRVIVDKGADIAPGTEIGVNLQEDKKRYHVSDEGIVVIPKGERVGY</sequence>
<protein>
    <recommendedName>
        <fullName evidence="1">Glucose-1-phosphate adenylyltransferase</fullName>
        <ecNumber evidence="1">2.7.7.27</ecNumber>
    </recommendedName>
    <alternativeName>
        <fullName evidence="1">ADP-glucose pyrophosphorylase</fullName>
        <shortName evidence="1">ADPGlc PPase</shortName>
    </alternativeName>
    <alternativeName>
        <fullName evidence="1">ADP-glucose synthase</fullName>
    </alternativeName>
</protein>